<comment type="function">
    <text evidence="1">Catalyzes the stereoinversion of LL-2,6-diaminopimelate (L,L-DAP) to meso-diaminopimelate (meso-DAP), a precursor of L-lysine and an essential component of the bacterial peptidoglycan.</text>
</comment>
<comment type="catalytic activity">
    <reaction evidence="1">
        <text>(2S,6S)-2,6-diaminopimelate = meso-2,6-diaminopimelate</text>
        <dbReference type="Rhea" id="RHEA:15393"/>
        <dbReference type="ChEBI" id="CHEBI:57609"/>
        <dbReference type="ChEBI" id="CHEBI:57791"/>
        <dbReference type="EC" id="5.1.1.7"/>
    </reaction>
</comment>
<comment type="pathway">
    <text evidence="1">Amino-acid biosynthesis; L-lysine biosynthesis via DAP pathway; DL-2,6-diaminopimelate from LL-2,6-diaminopimelate: step 1/1.</text>
</comment>
<comment type="subunit">
    <text evidence="1">Homodimer.</text>
</comment>
<comment type="subcellular location">
    <subcellularLocation>
        <location evidence="1">Cytoplasm</location>
    </subcellularLocation>
</comment>
<comment type="similarity">
    <text evidence="1">Belongs to the diaminopimelate epimerase family.</text>
</comment>
<proteinExistence type="inferred from homology"/>
<protein>
    <recommendedName>
        <fullName evidence="1">Diaminopimelate epimerase</fullName>
        <shortName evidence="1">DAP epimerase</shortName>
        <ecNumber evidence="1">5.1.1.7</ecNumber>
    </recommendedName>
    <alternativeName>
        <fullName evidence="1">PLP-independent amino acid racemase</fullName>
    </alternativeName>
</protein>
<keyword id="KW-0028">Amino-acid biosynthesis</keyword>
<keyword id="KW-0963">Cytoplasm</keyword>
<keyword id="KW-0413">Isomerase</keyword>
<keyword id="KW-0457">Lysine biosynthesis</keyword>
<keyword id="KW-1185">Reference proteome</keyword>
<evidence type="ECO:0000255" key="1">
    <source>
        <dbReference type="HAMAP-Rule" id="MF_00197"/>
    </source>
</evidence>
<dbReference type="EC" id="5.1.1.7" evidence="1"/>
<dbReference type="EMBL" id="CU458896">
    <property type="protein sequence ID" value="CAM63121.1"/>
    <property type="molecule type" value="Genomic_DNA"/>
</dbReference>
<dbReference type="RefSeq" id="WP_005111544.1">
    <property type="nucleotide sequence ID" value="NZ_MLCG01000003.1"/>
</dbReference>
<dbReference type="SMR" id="B1MD00"/>
<dbReference type="GeneID" id="93379976"/>
<dbReference type="KEGG" id="mab:MAB_3043c"/>
<dbReference type="UniPathway" id="UPA00034">
    <property type="reaction ID" value="UER00025"/>
</dbReference>
<dbReference type="Proteomes" id="UP000007137">
    <property type="component" value="Chromosome"/>
</dbReference>
<dbReference type="GO" id="GO:0005829">
    <property type="term" value="C:cytosol"/>
    <property type="evidence" value="ECO:0007669"/>
    <property type="project" value="TreeGrafter"/>
</dbReference>
<dbReference type="GO" id="GO:0008837">
    <property type="term" value="F:diaminopimelate epimerase activity"/>
    <property type="evidence" value="ECO:0007669"/>
    <property type="project" value="UniProtKB-UniRule"/>
</dbReference>
<dbReference type="GO" id="GO:0009089">
    <property type="term" value="P:lysine biosynthetic process via diaminopimelate"/>
    <property type="evidence" value="ECO:0007669"/>
    <property type="project" value="UniProtKB-UniRule"/>
</dbReference>
<dbReference type="Gene3D" id="3.10.310.10">
    <property type="entry name" value="Diaminopimelate Epimerase, Chain A, domain 1"/>
    <property type="match status" value="2"/>
</dbReference>
<dbReference type="HAMAP" id="MF_00197">
    <property type="entry name" value="DAP_epimerase"/>
    <property type="match status" value="1"/>
</dbReference>
<dbReference type="InterPro" id="IPR018510">
    <property type="entry name" value="DAP_epimerase_AS"/>
</dbReference>
<dbReference type="InterPro" id="IPR001653">
    <property type="entry name" value="DAP_epimerase_DapF"/>
</dbReference>
<dbReference type="NCBIfam" id="TIGR00652">
    <property type="entry name" value="DapF"/>
    <property type="match status" value="1"/>
</dbReference>
<dbReference type="PANTHER" id="PTHR31689:SF0">
    <property type="entry name" value="DIAMINOPIMELATE EPIMERASE"/>
    <property type="match status" value="1"/>
</dbReference>
<dbReference type="PANTHER" id="PTHR31689">
    <property type="entry name" value="DIAMINOPIMELATE EPIMERASE, CHLOROPLASTIC"/>
    <property type="match status" value="1"/>
</dbReference>
<dbReference type="Pfam" id="PF01678">
    <property type="entry name" value="DAP_epimerase"/>
    <property type="match status" value="2"/>
</dbReference>
<dbReference type="SUPFAM" id="SSF54506">
    <property type="entry name" value="Diaminopimelate epimerase-like"/>
    <property type="match status" value="2"/>
</dbReference>
<dbReference type="PROSITE" id="PS01326">
    <property type="entry name" value="DAP_EPIMERASE"/>
    <property type="match status" value="1"/>
</dbReference>
<organism>
    <name type="scientific">Mycobacteroides abscessus (strain ATCC 19977 / DSM 44196 / CCUG 20993 / CIP 104536 / JCM 13569 / NCTC 13031 / TMC 1543 / L948)</name>
    <name type="common">Mycobacterium abscessus</name>
    <dbReference type="NCBI Taxonomy" id="561007"/>
    <lineage>
        <taxon>Bacteria</taxon>
        <taxon>Bacillati</taxon>
        <taxon>Actinomycetota</taxon>
        <taxon>Actinomycetes</taxon>
        <taxon>Mycobacteriales</taxon>
        <taxon>Mycobacteriaceae</taxon>
        <taxon>Mycobacteroides</taxon>
        <taxon>Mycobacteroides abscessus</taxon>
    </lineage>
</organism>
<reference key="1">
    <citation type="journal article" date="2009" name="PLoS ONE">
        <title>Non mycobacterial virulence genes in the genome of the emerging pathogen Mycobacterium abscessus.</title>
        <authorList>
            <person name="Ripoll F."/>
            <person name="Pasek S."/>
            <person name="Schenowitz C."/>
            <person name="Dossat C."/>
            <person name="Barbe V."/>
            <person name="Rottman M."/>
            <person name="Macheras E."/>
            <person name="Heym B."/>
            <person name="Herrmann J.L."/>
            <person name="Daffe M."/>
            <person name="Brosch R."/>
            <person name="Risler J.L."/>
            <person name="Gaillard J.L."/>
        </authorList>
    </citation>
    <scope>NUCLEOTIDE SEQUENCE [LARGE SCALE GENOMIC DNA]</scope>
    <source>
        <strain>ATCC 19977 / DSM 44196 / CCUG 20993 / CIP 104536 / JCM 13569 / NCTC 13031 / TMC 1543 / L948</strain>
    </source>
</reference>
<name>DAPF_MYCA9</name>
<gene>
    <name evidence="1" type="primary">dapF</name>
    <name type="ordered locus">MAB_3043c</name>
</gene>
<feature type="chain" id="PRO_1000099249" description="Diaminopimelate epimerase">
    <location>
        <begin position="1"/>
        <end position="295"/>
    </location>
</feature>
<feature type="active site" description="Proton donor" evidence="1">
    <location>
        <position position="87"/>
    </location>
</feature>
<feature type="active site" description="Proton acceptor" evidence="1">
    <location>
        <position position="229"/>
    </location>
</feature>
<feature type="binding site" evidence="1">
    <location>
        <position position="11"/>
    </location>
    <ligand>
        <name>substrate</name>
    </ligand>
</feature>
<feature type="binding site" evidence="1">
    <location>
        <position position="78"/>
    </location>
    <ligand>
        <name>substrate</name>
    </ligand>
</feature>
<feature type="binding site" evidence="1">
    <location>
        <begin position="88"/>
        <end position="89"/>
    </location>
    <ligand>
        <name>substrate</name>
    </ligand>
</feature>
<feature type="binding site" evidence="1">
    <location>
        <position position="163"/>
    </location>
    <ligand>
        <name>substrate</name>
    </ligand>
</feature>
<feature type="binding site" evidence="1">
    <location>
        <position position="199"/>
    </location>
    <ligand>
        <name>substrate</name>
    </ligand>
</feature>
<feature type="binding site" evidence="1">
    <location>
        <begin position="220"/>
        <end position="221"/>
    </location>
    <ligand>
        <name>substrate</name>
    </ligand>
</feature>
<feature type="binding site" evidence="1">
    <location>
        <begin position="230"/>
        <end position="231"/>
    </location>
    <ligand>
        <name>substrate</name>
    </ligand>
</feature>
<feature type="site" description="Could be important to modulate the pK values of the two catalytic cysteine residues" evidence="1">
    <location>
        <position position="165"/>
    </location>
</feature>
<feature type="site" description="Could be important to modulate the pK values of the two catalytic cysteine residues" evidence="1">
    <location>
        <position position="220"/>
    </location>
</feature>
<accession>B1MD00</accession>
<sequence length="295" mass="31029">MKFTKGHGTQNDFVVLPDVHIKRDLSVAAVQALCDRQRGLGADGVLRVTTVGAALEGGVLAEKPAGVSSEDWFMDYRNADGSIAEMCGNGVRVFAHYLRSVGLEHRDEFVVASLAGPRPVRINSWSQLTADVTVDMGPVKEFGAGEAIVGGRRFSGLAIDVGNPHLACVDAVLTTEQLRILDVGAPVTFDEQLFPDGVNVEVLTAPSAGPANTVHMRVHERGVGETRSCGTGTVAAAYAALRHIGQRTGEVVVNIPGGQVRVTVTGESSFLRGPSMLLADGEISDEWWGGIGACG</sequence>